<keyword id="KW-0963">Cytoplasm</keyword>
<keyword id="KW-0444">Lipid biosynthesis</keyword>
<keyword id="KW-0443">Lipid metabolism</keyword>
<keyword id="KW-0594">Phospholipid biosynthesis</keyword>
<keyword id="KW-1208">Phospholipid metabolism</keyword>
<keyword id="KW-0808">Transferase</keyword>
<accession>A7ZZ47</accession>
<gene>
    <name evidence="1" type="primary">plsX</name>
    <name type="ordered locus">EcHS_A1212</name>
</gene>
<comment type="function">
    <text evidence="1">Catalyzes the reversible formation of acyl-phosphate (acyl-PO(4)) from acyl-[acyl-carrier-protein] (acyl-ACP). This enzyme utilizes acyl-ACP as fatty acyl donor, but not acyl-CoA.</text>
</comment>
<comment type="catalytic activity">
    <reaction evidence="1">
        <text>a fatty acyl-[ACP] + phosphate = an acyl phosphate + holo-[ACP]</text>
        <dbReference type="Rhea" id="RHEA:42292"/>
        <dbReference type="Rhea" id="RHEA-COMP:9685"/>
        <dbReference type="Rhea" id="RHEA-COMP:14125"/>
        <dbReference type="ChEBI" id="CHEBI:43474"/>
        <dbReference type="ChEBI" id="CHEBI:59918"/>
        <dbReference type="ChEBI" id="CHEBI:64479"/>
        <dbReference type="ChEBI" id="CHEBI:138651"/>
        <dbReference type="EC" id="2.3.1.274"/>
    </reaction>
</comment>
<comment type="pathway">
    <text evidence="1">Lipid metabolism; phospholipid metabolism.</text>
</comment>
<comment type="subunit">
    <text evidence="1">Homodimer. Probably interacts with PlsY.</text>
</comment>
<comment type="subcellular location">
    <subcellularLocation>
        <location evidence="1">Cytoplasm</location>
    </subcellularLocation>
    <text evidence="1">Associated with the membrane possibly through PlsY.</text>
</comment>
<comment type="similarity">
    <text evidence="1">Belongs to the PlsX family.</text>
</comment>
<protein>
    <recommendedName>
        <fullName evidence="1">Phosphate acyltransferase</fullName>
        <ecNumber evidence="1">2.3.1.274</ecNumber>
    </recommendedName>
    <alternativeName>
        <fullName evidence="1">Acyl-ACP phosphotransacylase</fullName>
    </alternativeName>
    <alternativeName>
        <fullName evidence="1">Acyl-[acyl-carrier-protein]--phosphate acyltransferase</fullName>
    </alternativeName>
    <alternativeName>
        <fullName evidence="1">Phosphate-acyl-ACP acyltransferase</fullName>
    </alternativeName>
</protein>
<reference key="1">
    <citation type="journal article" date="2008" name="J. Bacteriol.">
        <title>The pangenome structure of Escherichia coli: comparative genomic analysis of E. coli commensal and pathogenic isolates.</title>
        <authorList>
            <person name="Rasko D.A."/>
            <person name="Rosovitz M.J."/>
            <person name="Myers G.S.A."/>
            <person name="Mongodin E.F."/>
            <person name="Fricke W.F."/>
            <person name="Gajer P."/>
            <person name="Crabtree J."/>
            <person name="Sebaihia M."/>
            <person name="Thomson N.R."/>
            <person name="Chaudhuri R."/>
            <person name="Henderson I.R."/>
            <person name="Sperandio V."/>
            <person name="Ravel J."/>
        </authorList>
    </citation>
    <scope>NUCLEOTIDE SEQUENCE [LARGE SCALE GENOMIC DNA]</scope>
    <source>
        <strain>HS</strain>
    </source>
</reference>
<sequence length="356" mass="38224">MTRLTLALDVMGGDFGPSVTVPAALQALNSNSQLTLLLVGNPDAITPLLAKADFEQRSRLQIIPAQSVIASDARPSQAIRASRGSSMRVALELVKEGRAQACVSAGNTGALMGLAKLLLKPLEGIERPALVTVLPHQQKGKTVVLDLGANVDCDSTMLVQFAIMGSVLAEEVVEIPNPRVALLNIGEEEVKGLDSIRDASAVLKTIPSINYIGYLEANELLTGKTDVLVCDGFTGNVTLKTMEGVVRMFLSLLKSQGEGKKRSWWLLLLKRWLQKSLTRRFSHLNPDQYNGACLLGLRGTVIKSHGAANQRAFAVAIEQAVQAVQRQVPQRIAARLESVYPAGFELLDGGKSGTLR</sequence>
<proteinExistence type="inferred from homology"/>
<feature type="chain" id="PRO_1000057173" description="Phosphate acyltransferase">
    <location>
        <begin position="1"/>
        <end position="356"/>
    </location>
</feature>
<organism>
    <name type="scientific">Escherichia coli O9:H4 (strain HS)</name>
    <dbReference type="NCBI Taxonomy" id="331112"/>
    <lineage>
        <taxon>Bacteria</taxon>
        <taxon>Pseudomonadati</taxon>
        <taxon>Pseudomonadota</taxon>
        <taxon>Gammaproteobacteria</taxon>
        <taxon>Enterobacterales</taxon>
        <taxon>Enterobacteriaceae</taxon>
        <taxon>Escherichia</taxon>
    </lineage>
</organism>
<dbReference type="EC" id="2.3.1.274" evidence="1"/>
<dbReference type="EMBL" id="CP000802">
    <property type="protein sequence ID" value="ABV05551.1"/>
    <property type="molecule type" value="Genomic_DNA"/>
</dbReference>
<dbReference type="RefSeq" id="WP_000197578.1">
    <property type="nucleotide sequence ID" value="NC_009800.1"/>
</dbReference>
<dbReference type="SMR" id="A7ZZ47"/>
<dbReference type="GeneID" id="93776318"/>
<dbReference type="KEGG" id="ecx:EcHS_A1212"/>
<dbReference type="HOGENOM" id="CLU_039379_1_0_6"/>
<dbReference type="UniPathway" id="UPA00085"/>
<dbReference type="GO" id="GO:0005737">
    <property type="term" value="C:cytoplasm"/>
    <property type="evidence" value="ECO:0007669"/>
    <property type="project" value="UniProtKB-SubCell"/>
</dbReference>
<dbReference type="GO" id="GO:0043811">
    <property type="term" value="F:phosphate:acyl-[acyl carrier protein] acyltransferase activity"/>
    <property type="evidence" value="ECO:0007669"/>
    <property type="project" value="UniProtKB-UniRule"/>
</dbReference>
<dbReference type="GO" id="GO:0006633">
    <property type="term" value="P:fatty acid biosynthetic process"/>
    <property type="evidence" value="ECO:0007669"/>
    <property type="project" value="UniProtKB-UniRule"/>
</dbReference>
<dbReference type="GO" id="GO:0008654">
    <property type="term" value="P:phospholipid biosynthetic process"/>
    <property type="evidence" value="ECO:0007669"/>
    <property type="project" value="UniProtKB-KW"/>
</dbReference>
<dbReference type="FunFam" id="3.40.718.10:FF:000008">
    <property type="entry name" value="Phosphate acyltransferase"/>
    <property type="match status" value="1"/>
</dbReference>
<dbReference type="Gene3D" id="3.40.718.10">
    <property type="entry name" value="Isopropylmalate Dehydrogenase"/>
    <property type="match status" value="1"/>
</dbReference>
<dbReference type="HAMAP" id="MF_00019">
    <property type="entry name" value="PlsX"/>
    <property type="match status" value="1"/>
</dbReference>
<dbReference type="InterPro" id="IPR003664">
    <property type="entry name" value="FA_synthesis"/>
</dbReference>
<dbReference type="InterPro" id="IPR012281">
    <property type="entry name" value="Phospholipid_synth_PlsX-like"/>
</dbReference>
<dbReference type="NCBIfam" id="TIGR00182">
    <property type="entry name" value="plsX"/>
    <property type="match status" value="1"/>
</dbReference>
<dbReference type="PANTHER" id="PTHR30100">
    <property type="entry name" value="FATTY ACID/PHOSPHOLIPID SYNTHESIS PROTEIN PLSX"/>
    <property type="match status" value="1"/>
</dbReference>
<dbReference type="PANTHER" id="PTHR30100:SF1">
    <property type="entry name" value="PHOSPHATE ACYLTRANSFERASE"/>
    <property type="match status" value="1"/>
</dbReference>
<dbReference type="Pfam" id="PF02504">
    <property type="entry name" value="FA_synthesis"/>
    <property type="match status" value="1"/>
</dbReference>
<dbReference type="PIRSF" id="PIRSF002465">
    <property type="entry name" value="Phsphlp_syn_PlsX"/>
    <property type="match status" value="1"/>
</dbReference>
<dbReference type="SUPFAM" id="SSF53659">
    <property type="entry name" value="Isocitrate/Isopropylmalate dehydrogenase-like"/>
    <property type="match status" value="1"/>
</dbReference>
<evidence type="ECO:0000255" key="1">
    <source>
        <dbReference type="HAMAP-Rule" id="MF_00019"/>
    </source>
</evidence>
<name>PLSX_ECOHS</name>